<proteinExistence type="inferred from homology"/>
<protein>
    <recommendedName>
        <fullName evidence="8">Iron-sulfur clusters transporter ATM1, mitochondrial</fullName>
        <ecNumber evidence="2">7.-.-.-</ecNumber>
    </recommendedName>
</protein>
<sequence length="750" mass="84059">MFIRNVKLIKPSPVRFISPIPFSFPISRSIKISSIRYFTNKSTSNFKSTSSSSSLKSTSTSTSTSTSKTTPKTLSKPPPKVKPPIQDNDTTSSGSSSSENSESFMLKSLFKTIWPKNNLNFKIRVIIALSLLVGAKILNVQVPFYFKQIIDTMNIDWTNEVGVFSTVIGSLILAYGGARFGAVLFGELRNAIFASVAQSAIRRVAYNTFVKLLNMDLQFHLSRQTGGLTRAIDRGTKGISYVLSAMVFHIIPITLEISIVCGILTYNYGASFAAMTFVTMLAYSIFTIQTTAWRTKFRRQANNADNQAANVALDSLINYESVKIFNNELYQASKYDKALMKYQQSSVKIATSLAFLNSGQNFIFTSALTAMMYMGCQGVYTGELTVGDLVLINQLVFQLSVPLNFLGSVYRELKQSLLDMENLFQLQNQPIRIKEIPNAPPLKLNNNNNNNNNNNNNNNNSLPGEIRFENVSFGYHPDRPILNNASFTIPAGQKVAIVGPSGSGKSTILRLIFRFYDINQGRILIDGQDISKVSLESLRKLIGIVPQETPLFNDTILENIRYGRLDASDEEIYRVINQVQLNKLIDDLPDGVQTIVGERGMMISGGEKQRLAMARLLLKRAPITFFDEATSALDTHTEQALLKTIRSVFKQQHQTNVSIAHRLRTIADADKIIVLNKGQVVEEGTHWQLLNEQPNSLYAQLWNIQENLDIEKELLQGDEEEEELTEKLKLDKQELEQEAKLFNSQTFEKK</sequence>
<accession>Q59R09</accession>
<accession>A0A1D8PQD0</accession>
<accession>Q59QY3</accession>
<comment type="function">
    <text evidence="1">Performs an essential function in the generation of cytoplasmic iron-sulfur proteins by mediating the ATP-dependent export of Fe/S cluster precursors synthesized by NFS1 and other mitochondrial proteins (By similarity). Hydrolyzes ATP (By similarity). Binds glutathione and may function by transporting a glutathione-conjugated iron-sulfur compound (By similarity).</text>
</comment>
<comment type="subunit">
    <text evidence="1">Homodimer.</text>
</comment>
<comment type="subcellular location">
    <subcellularLocation>
        <location evidence="1">Mitochondrion inner membrane</location>
        <topology evidence="6">Multi-pass membrane protein</topology>
    </subcellularLocation>
</comment>
<comment type="similarity">
    <text evidence="8">Belongs to the ABC transporter superfamily. ABCB family. Heavy Metal importer (TC 3.A.1.210) subfamily.</text>
</comment>
<reference key="1">
    <citation type="journal article" date="2004" name="Proc. Natl. Acad. Sci. U.S.A.">
        <title>The diploid genome sequence of Candida albicans.</title>
        <authorList>
            <person name="Jones T."/>
            <person name="Federspiel N.A."/>
            <person name="Chibana H."/>
            <person name="Dungan J."/>
            <person name="Kalman S."/>
            <person name="Magee B.B."/>
            <person name="Newport G."/>
            <person name="Thorstenson Y.R."/>
            <person name="Agabian N."/>
            <person name="Magee P.T."/>
            <person name="Davis R.W."/>
            <person name="Scherer S."/>
        </authorList>
    </citation>
    <scope>NUCLEOTIDE SEQUENCE [LARGE SCALE GENOMIC DNA]</scope>
    <source>
        <strain>SC5314 / ATCC MYA-2876</strain>
    </source>
</reference>
<reference key="2">
    <citation type="journal article" date="2007" name="Genome Biol.">
        <title>Assembly of the Candida albicans genome into sixteen supercontigs aligned on the eight chromosomes.</title>
        <authorList>
            <person name="van het Hoog M."/>
            <person name="Rast T.J."/>
            <person name="Martchenko M."/>
            <person name="Grindle S."/>
            <person name="Dignard D."/>
            <person name="Hogues H."/>
            <person name="Cuomo C."/>
            <person name="Berriman M."/>
            <person name="Scherer S."/>
            <person name="Magee B.B."/>
            <person name="Whiteway M."/>
            <person name="Chibana H."/>
            <person name="Nantel A."/>
            <person name="Magee P.T."/>
        </authorList>
    </citation>
    <scope>GENOME REANNOTATION</scope>
    <source>
        <strain>SC5314 / ATCC MYA-2876</strain>
    </source>
</reference>
<reference key="3">
    <citation type="journal article" date="2013" name="Genome Biol.">
        <title>Assembly of a phased diploid Candida albicans genome facilitates allele-specific measurements and provides a simple model for repeat and indel structure.</title>
        <authorList>
            <person name="Muzzey D."/>
            <person name="Schwartz K."/>
            <person name="Weissman J.S."/>
            <person name="Sherlock G."/>
        </authorList>
    </citation>
    <scope>NUCLEOTIDE SEQUENCE [LARGE SCALE GENOMIC DNA]</scope>
    <scope>GENOME REANNOTATION</scope>
    <source>
        <strain>SC5314 / ATCC MYA-2876</strain>
    </source>
</reference>
<feature type="transit peptide" description="Mitochondrion" evidence="4">
    <location>
        <begin position="1"/>
        <end position="16"/>
    </location>
</feature>
<feature type="chain" id="PRO_0000255440" description="Iron-sulfur clusters transporter ATM1, mitochondrial">
    <location>
        <begin position="17"/>
        <end position="750"/>
    </location>
</feature>
<feature type="topological domain" description="Mitochondrial matrix" evidence="1">
    <location>
        <begin position="17"/>
        <end position="124"/>
    </location>
</feature>
<feature type="transmembrane region" description="Helical" evidence="6">
    <location>
        <begin position="125"/>
        <end position="146"/>
    </location>
</feature>
<feature type="topological domain" description="Mitochondrial intermembrane" evidence="1">
    <location>
        <begin position="147"/>
        <end position="169"/>
    </location>
</feature>
<feature type="transmembrane region" description="Helical" evidence="6">
    <location>
        <begin position="170"/>
        <end position="193"/>
    </location>
</feature>
<feature type="topological domain" description="Mitochondrial matrix" evidence="1">
    <location>
        <begin position="194"/>
        <end position="242"/>
    </location>
</feature>
<feature type="transmembrane region" description="Helical" evidence="6">
    <location>
        <begin position="243"/>
        <end position="266"/>
    </location>
</feature>
<feature type="topological domain" description="Mitochondrial intermembrane" evidence="1">
    <location>
        <position position="267"/>
    </location>
</feature>
<feature type="transmembrane region" description="Helical" evidence="6">
    <location>
        <begin position="268"/>
        <end position="288"/>
    </location>
</feature>
<feature type="topological domain" description="Mitochondrial matrix" evidence="1">
    <location>
        <begin position="289"/>
        <end position="354"/>
    </location>
</feature>
<feature type="transmembrane region" description="Helical" evidence="6">
    <location>
        <begin position="355"/>
        <end position="373"/>
    </location>
</feature>
<feature type="topological domain" description="Mitochondrial intermembrane" evidence="1">
    <location>
        <begin position="374"/>
        <end position="388"/>
    </location>
</feature>
<feature type="transmembrane region" description="Helical" evidence="6">
    <location>
        <begin position="389"/>
        <end position="410"/>
    </location>
</feature>
<feature type="topological domain" description="Mitochondrial matrix" evidence="1">
    <location>
        <begin position="411"/>
        <end position="750"/>
    </location>
</feature>
<feature type="domain" description="ABC transmembrane type-1" evidence="6">
    <location>
        <begin position="125"/>
        <end position="415"/>
    </location>
</feature>
<feature type="domain" description="ABC transporter" evidence="5">
    <location>
        <begin position="466"/>
        <end position="702"/>
    </location>
</feature>
<feature type="region of interest" description="Disordered" evidence="7">
    <location>
        <begin position="43"/>
        <end position="100"/>
    </location>
</feature>
<feature type="region of interest" description="Disordered" evidence="7">
    <location>
        <begin position="437"/>
        <end position="462"/>
    </location>
</feature>
<feature type="compositionally biased region" description="Low complexity" evidence="7">
    <location>
        <begin position="43"/>
        <end position="75"/>
    </location>
</feature>
<feature type="compositionally biased region" description="Low complexity" evidence="7">
    <location>
        <begin position="87"/>
        <end position="100"/>
    </location>
</feature>
<feature type="compositionally biased region" description="Low complexity" evidence="7">
    <location>
        <begin position="445"/>
        <end position="460"/>
    </location>
</feature>
<feature type="binding site" evidence="1">
    <location>
        <begin position="294"/>
        <end position="298"/>
    </location>
    <ligand>
        <name>glutathione</name>
        <dbReference type="ChEBI" id="CHEBI:57925"/>
    </ligand>
</feature>
<feature type="binding site" evidence="1">
    <location>
        <begin position="357"/>
        <end position="360"/>
    </location>
    <ligand>
        <name>glutathione</name>
        <dbReference type="ChEBI" id="CHEBI:57925"/>
    </ligand>
</feature>
<feature type="binding site" evidence="2">
    <location>
        <position position="407"/>
    </location>
    <ligand>
        <name>glutathione</name>
        <dbReference type="ChEBI" id="CHEBI:57925"/>
    </ligand>
</feature>
<feature type="binding site" evidence="3">
    <location>
        <position position="475"/>
    </location>
    <ligand>
        <name>ATP</name>
        <dbReference type="ChEBI" id="CHEBI:30616"/>
    </ligand>
</feature>
<feature type="binding site" evidence="5">
    <location>
        <begin position="499"/>
        <end position="510"/>
    </location>
    <ligand>
        <name>ATP</name>
        <dbReference type="ChEBI" id="CHEBI:30616"/>
    </ligand>
</feature>
<gene>
    <name evidence="8" type="primary">ATM1</name>
    <name type="ordered locus">CAALFM_C604210CA</name>
    <name type="ORF">CaO19.1077</name>
    <name type="ORF">CaO19.8678</name>
</gene>
<keyword id="KW-0067">ATP-binding</keyword>
<keyword id="KW-0472">Membrane</keyword>
<keyword id="KW-0496">Mitochondrion</keyword>
<keyword id="KW-0999">Mitochondrion inner membrane</keyword>
<keyword id="KW-0547">Nucleotide-binding</keyword>
<keyword id="KW-1185">Reference proteome</keyword>
<keyword id="KW-0809">Transit peptide</keyword>
<keyword id="KW-1278">Translocase</keyword>
<keyword id="KW-0812">Transmembrane</keyword>
<keyword id="KW-1133">Transmembrane helix</keyword>
<keyword id="KW-0813">Transport</keyword>
<evidence type="ECO:0000250" key="1">
    <source>
        <dbReference type="UniProtKB" id="P40416"/>
    </source>
</evidence>
<evidence type="ECO:0000250" key="2">
    <source>
        <dbReference type="UniProtKB" id="Q2G506"/>
    </source>
</evidence>
<evidence type="ECO:0000250" key="3">
    <source>
        <dbReference type="UniProtKB" id="Q9NP58"/>
    </source>
</evidence>
<evidence type="ECO:0000255" key="4"/>
<evidence type="ECO:0000255" key="5">
    <source>
        <dbReference type="PROSITE-ProRule" id="PRU00434"/>
    </source>
</evidence>
<evidence type="ECO:0000255" key="6">
    <source>
        <dbReference type="PROSITE-ProRule" id="PRU00441"/>
    </source>
</evidence>
<evidence type="ECO:0000256" key="7">
    <source>
        <dbReference type="SAM" id="MobiDB-lite"/>
    </source>
</evidence>
<evidence type="ECO:0000305" key="8"/>
<dbReference type="EC" id="7.-.-.-" evidence="2"/>
<dbReference type="EMBL" id="CP017628">
    <property type="protein sequence ID" value="AOW30340.1"/>
    <property type="molecule type" value="Genomic_DNA"/>
</dbReference>
<dbReference type="RefSeq" id="XP_712090.2">
    <property type="nucleotide sequence ID" value="XM_706997.2"/>
</dbReference>
<dbReference type="SMR" id="Q59R09"/>
<dbReference type="FunCoup" id="Q59R09">
    <property type="interactions" value="704"/>
</dbReference>
<dbReference type="STRING" id="237561.Q59R09"/>
<dbReference type="EnsemblFungi" id="C6_04210C_A-T">
    <property type="protein sequence ID" value="C6_04210C_A-T-p1"/>
    <property type="gene ID" value="C6_04210C_A"/>
</dbReference>
<dbReference type="GeneID" id="3646284"/>
<dbReference type="KEGG" id="cal:CAALFM_C604210CA"/>
<dbReference type="CGD" id="CAL0000178930">
    <property type="gene designation" value="ATM1"/>
</dbReference>
<dbReference type="VEuPathDB" id="FungiDB:C6_04210C_A"/>
<dbReference type="eggNOG" id="KOG0057">
    <property type="taxonomic scope" value="Eukaryota"/>
</dbReference>
<dbReference type="HOGENOM" id="CLU_000604_84_1_1"/>
<dbReference type="InParanoid" id="Q59R09"/>
<dbReference type="OrthoDB" id="6500128at2759"/>
<dbReference type="PRO" id="PR:Q59R09"/>
<dbReference type="Proteomes" id="UP000000559">
    <property type="component" value="Chromosome 6"/>
</dbReference>
<dbReference type="GO" id="GO:0005743">
    <property type="term" value="C:mitochondrial inner membrane"/>
    <property type="evidence" value="ECO:0000318"/>
    <property type="project" value="GO_Central"/>
</dbReference>
<dbReference type="GO" id="GO:0140359">
    <property type="term" value="F:ABC-type transporter activity"/>
    <property type="evidence" value="ECO:0007669"/>
    <property type="project" value="InterPro"/>
</dbReference>
<dbReference type="GO" id="GO:0005524">
    <property type="term" value="F:ATP binding"/>
    <property type="evidence" value="ECO:0007669"/>
    <property type="project" value="UniProtKB-KW"/>
</dbReference>
<dbReference type="GO" id="GO:0016887">
    <property type="term" value="F:ATP hydrolysis activity"/>
    <property type="evidence" value="ECO:0007669"/>
    <property type="project" value="InterPro"/>
</dbReference>
<dbReference type="GO" id="GO:0042626">
    <property type="term" value="F:ATPase-coupled transmembrane transporter activity"/>
    <property type="evidence" value="ECO:0000318"/>
    <property type="project" value="GO_Central"/>
</dbReference>
<dbReference type="GO" id="GO:0006879">
    <property type="term" value="P:intracellular iron ion homeostasis"/>
    <property type="evidence" value="ECO:0000318"/>
    <property type="project" value="GO_Central"/>
</dbReference>
<dbReference type="GO" id="GO:0055085">
    <property type="term" value="P:transmembrane transport"/>
    <property type="evidence" value="ECO:0000318"/>
    <property type="project" value="GO_Central"/>
</dbReference>
<dbReference type="CDD" id="cd18582">
    <property type="entry name" value="ABC_6TM_ATM1_ABCB7"/>
    <property type="match status" value="1"/>
</dbReference>
<dbReference type="FunFam" id="1.20.1560.10:FF:000004">
    <property type="entry name" value="ATP-binding cassette sub-family B member 7"/>
    <property type="match status" value="1"/>
</dbReference>
<dbReference type="FunFam" id="3.40.50.300:FF:000287">
    <property type="entry name" value="Multidrug ABC transporter ATP-binding protein"/>
    <property type="match status" value="1"/>
</dbReference>
<dbReference type="Gene3D" id="1.20.1560.10">
    <property type="entry name" value="ABC transporter type 1, transmembrane domain"/>
    <property type="match status" value="1"/>
</dbReference>
<dbReference type="Gene3D" id="3.40.50.300">
    <property type="entry name" value="P-loop containing nucleotide triphosphate hydrolases"/>
    <property type="match status" value="1"/>
</dbReference>
<dbReference type="InterPro" id="IPR003593">
    <property type="entry name" value="AAA+_ATPase"/>
</dbReference>
<dbReference type="InterPro" id="IPR011527">
    <property type="entry name" value="ABC1_TM_dom"/>
</dbReference>
<dbReference type="InterPro" id="IPR036640">
    <property type="entry name" value="ABC1_TM_sf"/>
</dbReference>
<dbReference type="InterPro" id="IPR003439">
    <property type="entry name" value="ABC_transporter-like_ATP-bd"/>
</dbReference>
<dbReference type="InterPro" id="IPR017871">
    <property type="entry name" value="ABC_transporter-like_CS"/>
</dbReference>
<dbReference type="InterPro" id="IPR027417">
    <property type="entry name" value="P-loop_NTPase"/>
</dbReference>
<dbReference type="InterPro" id="IPR039421">
    <property type="entry name" value="Type_1_exporter"/>
</dbReference>
<dbReference type="PANTHER" id="PTHR24221">
    <property type="entry name" value="ATP-BINDING CASSETTE SUB-FAMILY B"/>
    <property type="match status" value="1"/>
</dbReference>
<dbReference type="PANTHER" id="PTHR24221:SF402">
    <property type="entry name" value="IRON-SULFUR CLUSTERS TRANSPORTER ABCB7, MITOCHONDRIAL"/>
    <property type="match status" value="1"/>
</dbReference>
<dbReference type="Pfam" id="PF00664">
    <property type="entry name" value="ABC_membrane"/>
    <property type="match status" value="1"/>
</dbReference>
<dbReference type="Pfam" id="PF00005">
    <property type="entry name" value="ABC_tran"/>
    <property type="match status" value="1"/>
</dbReference>
<dbReference type="SMART" id="SM00382">
    <property type="entry name" value="AAA"/>
    <property type="match status" value="1"/>
</dbReference>
<dbReference type="SUPFAM" id="SSF90123">
    <property type="entry name" value="ABC transporter transmembrane region"/>
    <property type="match status" value="1"/>
</dbReference>
<dbReference type="SUPFAM" id="SSF52540">
    <property type="entry name" value="P-loop containing nucleoside triphosphate hydrolases"/>
    <property type="match status" value="1"/>
</dbReference>
<dbReference type="PROSITE" id="PS50929">
    <property type="entry name" value="ABC_TM1F"/>
    <property type="match status" value="1"/>
</dbReference>
<dbReference type="PROSITE" id="PS00211">
    <property type="entry name" value="ABC_TRANSPORTER_1"/>
    <property type="match status" value="1"/>
</dbReference>
<dbReference type="PROSITE" id="PS50893">
    <property type="entry name" value="ABC_TRANSPORTER_2"/>
    <property type="match status" value="1"/>
</dbReference>
<organism>
    <name type="scientific">Candida albicans (strain SC5314 / ATCC MYA-2876)</name>
    <name type="common">Yeast</name>
    <dbReference type="NCBI Taxonomy" id="237561"/>
    <lineage>
        <taxon>Eukaryota</taxon>
        <taxon>Fungi</taxon>
        <taxon>Dikarya</taxon>
        <taxon>Ascomycota</taxon>
        <taxon>Saccharomycotina</taxon>
        <taxon>Pichiomycetes</taxon>
        <taxon>Debaryomycetaceae</taxon>
        <taxon>Candida/Lodderomyces clade</taxon>
        <taxon>Candida</taxon>
    </lineage>
</organism>
<name>ATM1_CANAL</name>